<gene>
    <name evidence="1" type="primary">rpmD</name>
    <name type="ordered locus">EcHS_A3496</name>
</gene>
<protein>
    <recommendedName>
        <fullName evidence="1">Large ribosomal subunit protein uL30</fullName>
    </recommendedName>
    <alternativeName>
        <fullName evidence="2">50S ribosomal protein L30</fullName>
    </alternativeName>
</protein>
<dbReference type="EMBL" id="CP000802">
    <property type="protein sequence ID" value="ABV07711.1"/>
    <property type="molecule type" value="Genomic_DNA"/>
</dbReference>
<dbReference type="RefSeq" id="WP_001140433.1">
    <property type="nucleotide sequence ID" value="NC_009800.1"/>
</dbReference>
<dbReference type="SMR" id="A8A5A7"/>
<dbReference type="GeneID" id="93778685"/>
<dbReference type="KEGG" id="ecx:EcHS_A3496"/>
<dbReference type="HOGENOM" id="CLU_131047_1_4_6"/>
<dbReference type="GO" id="GO:0022625">
    <property type="term" value="C:cytosolic large ribosomal subunit"/>
    <property type="evidence" value="ECO:0007669"/>
    <property type="project" value="TreeGrafter"/>
</dbReference>
<dbReference type="GO" id="GO:0003735">
    <property type="term" value="F:structural constituent of ribosome"/>
    <property type="evidence" value="ECO:0007669"/>
    <property type="project" value="InterPro"/>
</dbReference>
<dbReference type="GO" id="GO:0006412">
    <property type="term" value="P:translation"/>
    <property type="evidence" value="ECO:0007669"/>
    <property type="project" value="UniProtKB-UniRule"/>
</dbReference>
<dbReference type="CDD" id="cd01658">
    <property type="entry name" value="Ribosomal_L30"/>
    <property type="match status" value="1"/>
</dbReference>
<dbReference type="FunFam" id="3.30.1390.20:FF:000001">
    <property type="entry name" value="50S ribosomal protein L30"/>
    <property type="match status" value="1"/>
</dbReference>
<dbReference type="Gene3D" id="3.30.1390.20">
    <property type="entry name" value="Ribosomal protein L30, ferredoxin-like fold domain"/>
    <property type="match status" value="1"/>
</dbReference>
<dbReference type="HAMAP" id="MF_01371_B">
    <property type="entry name" value="Ribosomal_uL30_B"/>
    <property type="match status" value="1"/>
</dbReference>
<dbReference type="InterPro" id="IPR036919">
    <property type="entry name" value="Ribo_uL30_ferredoxin-like_sf"/>
</dbReference>
<dbReference type="InterPro" id="IPR005996">
    <property type="entry name" value="Ribosomal_uL30_bac-type"/>
</dbReference>
<dbReference type="InterPro" id="IPR018038">
    <property type="entry name" value="Ribosomal_uL30_CS"/>
</dbReference>
<dbReference type="InterPro" id="IPR016082">
    <property type="entry name" value="Ribosomal_uL30_ferredoxin-like"/>
</dbReference>
<dbReference type="NCBIfam" id="TIGR01308">
    <property type="entry name" value="rpmD_bact"/>
    <property type="match status" value="1"/>
</dbReference>
<dbReference type="PANTHER" id="PTHR15892:SF2">
    <property type="entry name" value="LARGE RIBOSOMAL SUBUNIT PROTEIN UL30M"/>
    <property type="match status" value="1"/>
</dbReference>
<dbReference type="PANTHER" id="PTHR15892">
    <property type="entry name" value="MITOCHONDRIAL RIBOSOMAL PROTEIN L30"/>
    <property type="match status" value="1"/>
</dbReference>
<dbReference type="Pfam" id="PF00327">
    <property type="entry name" value="Ribosomal_L30"/>
    <property type="match status" value="1"/>
</dbReference>
<dbReference type="PIRSF" id="PIRSF002211">
    <property type="entry name" value="Ribosomal_L30_bac-type"/>
    <property type="match status" value="1"/>
</dbReference>
<dbReference type="SUPFAM" id="SSF55129">
    <property type="entry name" value="Ribosomal protein L30p/L7e"/>
    <property type="match status" value="1"/>
</dbReference>
<dbReference type="PROSITE" id="PS00634">
    <property type="entry name" value="RIBOSOMAL_L30"/>
    <property type="match status" value="1"/>
</dbReference>
<feature type="chain" id="PRO_1000068196" description="Large ribosomal subunit protein uL30">
    <location>
        <begin position="1"/>
        <end position="59"/>
    </location>
</feature>
<proteinExistence type="inferred from homology"/>
<evidence type="ECO:0000255" key="1">
    <source>
        <dbReference type="HAMAP-Rule" id="MF_01371"/>
    </source>
</evidence>
<evidence type="ECO:0000305" key="2"/>
<keyword id="KW-0687">Ribonucleoprotein</keyword>
<keyword id="KW-0689">Ribosomal protein</keyword>
<organism>
    <name type="scientific">Escherichia coli O9:H4 (strain HS)</name>
    <dbReference type="NCBI Taxonomy" id="331112"/>
    <lineage>
        <taxon>Bacteria</taxon>
        <taxon>Pseudomonadati</taxon>
        <taxon>Pseudomonadota</taxon>
        <taxon>Gammaproteobacteria</taxon>
        <taxon>Enterobacterales</taxon>
        <taxon>Enterobacteriaceae</taxon>
        <taxon>Escherichia</taxon>
    </lineage>
</organism>
<sequence>MAKTIKITQTRSAIGRLPKHKATLLGLGLRRIGHTVEREDTPAIRGMINAVSFMVKVEE</sequence>
<comment type="subunit">
    <text evidence="1">Part of the 50S ribosomal subunit.</text>
</comment>
<comment type="similarity">
    <text evidence="1">Belongs to the universal ribosomal protein uL30 family.</text>
</comment>
<reference key="1">
    <citation type="journal article" date="2008" name="J. Bacteriol.">
        <title>The pangenome structure of Escherichia coli: comparative genomic analysis of E. coli commensal and pathogenic isolates.</title>
        <authorList>
            <person name="Rasko D.A."/>
            <person name="Rosovitz M.J."/>
            <person name="Myers G.S.A."/>
            <person name="Mongodin E.F."/>
            <person name="Fricke W.F."/>
            <person name="Gajer P."/>
            <person name="Crabtree J."/>
            <person name="Sebaihia M."/>
            <person name="Thomson N.R."/>
            <person name="Chaudhuri R."/>
            <person name="Henderson I.R."/>
            <person name="Sperandio V."/>
            <person name="Ravel J."/>
        </authorList>
    </citation>
    <scope>NUCLEOTIDE SEQUENCE [LARGE SCALE GENOMIC DNA]</scope>
    <source>
        <strain>HS</strain>
    </source>
</reference>
<accession>A8A5A7</accession>
<name>RL30_ECOHS</name>